<sequence>MFKALIVALAAVAAAIPTQQPSSNEMNCDSGVYCCNKVAQNTGIVVPIDALSSTCGDTLKLVTVDALNDKCTSQTVCCNNVQQNGLVNVACTPIDV</sequence>
<organism>
    <name type="scientific">Metarhizium anisopliae</name>
    <name type="common">Entomophthora anisopliae</name>
    <dbReference type="NCBI Taxonomy" id="5530"/>
    <lineage>
        <taxon>Eukaryota</taxon>
        <taxon>Fungi</taxon>
        <taxon>Dikarya</taxon>
        <taxon>Ascomycota</taxon>
        <taxon>Pezizomycotina</taxon>
        <taxon>Sordariomycetes</taxon>
        <taxon>Hypocreomycetidae</taxon>
        <taxon>Hypocreales</taxon>
        <taxon>Clavicipitaceae</taxon>
        <taxon>Metarhizium</taxon>
    </lineage>
</organism>
<accession>P52752</accession>
<comment type="function">
    <text evidence="4">Aerial growth, conidiation, and dispersal of filamentous fungi in the environment rely upon a capability of their secreting small amphipathic proteins called hydrophobins (HPBs) with low sequence identity. Class I can self-assemble into an outermost layer of rodlet bundles on aerial cell surfaces, conferring cellular hydrophobicity that supports fungal growth, development and dispersal; whereas Class II form highly ordered films at water-air interfaces through intermolecular interactions but contribute nothing to the rodlet structure.</text>
</comment>
<comment type="subunit">
    <text evidence="1">Self-assembles to form functional amyloid fibrils called rodlets. Self-assembly into fibrillar rodlets occurs spontaneously at hydrophobic:hydrophilic interfaces and the rodlets further associate laterally to form amphipathic monolayers.</text>
</comment>
<comment type="subcellular location">
    <subcellularLocation>
        <location evidence="1">Secreted</location>
    </subcellularLocation>
    <subcellularLocation>
        <location evidence="1">Secreted</location>
        <location evidence="1">Cell wall</location>
    </subcellularLocation>
</comment>
<comment type="induction">
    <text evidence="3">Expression is induced during nutrient deprivation and during formation of infection structures.</text>
</comment>
<comment type="similarity">
    <text evidence="4">Belongs to the fungal hydrophobin family.</text>
</comment>
<keyword id="KW-0134">Cell wall</keyword>
<keyword id="KW-0961">Cell wall biogenesis/degradation</keyword>
<keyword id="KW-1015">Disulfide bond</keyword>
<keyword id="KW-0964">Secreted</keyword>
<keyword id="KW-0732">Signal</keyword>
<keyword id="KW-0346">Stress response</keyword>
<feature type="signal peptide" evidence="2">
    <location>
        <begin position="1"/>
        <end position="19"/>
    </location>
</feature>
<feature type="chain" id="PRO_0000013511" description="Class I hydrophobin ssgA">
    <location>
        <begin position="20"/>
        <end position="96"/>
    </location>
</feature>
<feature type="disulfide bond" evidence="1">
    <location>
        <begin position="28"/>
        <end position="77"/>
    </location>
</feature>
<feature type="disulfide bond" evidence="1">
    <location>
        <begin position="34"/>
        <end position="71"/>
    </location>
</feature>
<feature type="disulfide bond" evidence="1">
    <location>
        <begin position="35"/>
        <end position="55"/>
    </location>
</feature>
<feature type="disulfide bond" evidence="1">
    <location>
        <begin position="78"/>
        <end position="91"/>
    </location>
</feature>
<name>SSGA_METAN</name>
<gene>
    <name evidence="3" type="primary">ssgA</name>
    <name type="synonym">SSG12</name>
</gene>
<reference key="1">
    <citation type="journal article" date="1992" name="Gene">
        <title>Cloning and regulatory analysis of starvation-stress gene, ssgA, encoding a hydrophobin-like protein from the entomopathogenic fungus, Metarhizium anisopliae.</title>
        <authorList>
            <person name="St Leger R.J."/>
            <person name="Staples R.C."/>
            <person name="Roberts D.W."/>
        </authorList>
    </citation>
    <scope>NUCLEOTIDE SEQUENCE [MRNA]</scope>
    <scope>INDUCTION</scope>
</reference>
<dbReference type="EMBL" id="M85281">
    <property type="protein sequence ID" value="AAA33418.1"/>
    <property type="molecule type" value="mRNA"/>
</dbReference>
<dbReference type="PIR" id="JC1429">
    <property type="entry name" value="JC1429"/>
</dbReference>
<dbReference type="SMR" id="P52752"/>
<dbReference type="GO" id="GO:0005576">
    <property type="term" value="C:extracellular region"/>
    <property type="evidence" value="ECO:0007669"/>
    <property type="project" value="UniProtKB-KW"/>
</dbReference>
<dbReference type="GO" id="GO:0009277">
    <property type="term" value="C:fungal-type cell wall"/>
    <property type="evidence" value="ECO:0007669"/>
    <property type="project" value="InterPro"/>
</dbReference>
<dbReference type="GO" id="GO:0005199">
    <property type="term" value="F:structural constituent of cell wall"/>
    <property type="evidence" value="ECO:0007669"/>
    <property type="project" value="InterPro"/>
</dbReference>
<dbReference type="GO" id="GO:0071555">
    <property type="term" value="P:cell wall organization"/>
    <property type="evidence" value="ECO:0007669"/>
    <property type="project" value="UniProtKB-KW"/>
</dbReference>
<dbReference type="CDD" id="cd23507">
    <property type="entry name" value="hydrophobin_I"/>
    <property type="match status" value="1"/>
</dbReference>
<dbReference type="InterPro" id="IPR001338">
    <property type="entry name" value="Hydrophobin"/>
</dbReference>
<dbReference type="InterPro" id="IPR019778">
    <property type="entry name" value="Hydrophobin_CS"/>
</dbReference>
<dbReference type="Pfam" id="PF01185">
    <property type="entry name" value="Hydrophobin"/>
    <property type="match status" value="1"/>
</dbReference>
<dbReference type="SMART" id="SM00075">
    <property type="entry name" value="HYDRO"/>
    <property type="match status" value="1"/>
</dbReference>
<dbReference type="PROSITE" id="PS00956">
    <property type="entry name" value="HYDROPHOBIN"/>
    <property type="match status" value="1"/>
</dbReference>
<proteinExistence type="evidence at transcript level"/>
<evidence type="ECO:0000250" key="1">
    <source>
        <dbReference type="UniProtKB" id="Q04571"/>
    </source>
</evidence>
<evidence type="ECO:0000255" key="2"/>
<evidence type="ECO:0000303" key="3">
    <source>
    </source>
</evidence>
<evidence type="ECO:0000305" key="4"/>
<protein>
    <recommendedName>
        <fullName evidence="3">Class I hydrophobin ssgA</fullName>
    </recommendedName>
    <alternativeName>
        <fullName evidence="3">Starvation-stress protein A</fullName>
    </alternativeName>
</protein>